<evidence type="ECO:0000255" key="1">
    <source>
        <dbReference type="HAMAP-Rule" id="MF_00362"/>
    </source>
</evidence>
<evidence type="ECO:0000305" key="2"/>
<sequence length="172" mass="18867">MKREKKEQVVQSVTEKVSRSQGIYLTEFQGLSVSRMSELRNEFRKAGVEYRVVKNTLVKKALSDLAGADRLAGALKNTTGVAFGYDDPIAPARVIKKFSKDNESLKFKMAAIDGVVFEADQLGVLSEMLTKTENIGRAAGIINNVIASVPMVMNAVMRDLVSVVDQVGKQKQ</sequence>
<name>RL10_CHLPM</name>
<gene>
    <name evidence="1" type="primary">rplJ</name>
    <name type="ordered locus">Cvib_1607</name>
</gene>
<accession>A4SGK8</accession>
<dbReference type="EMBL" id="CP000607">
    <property type="protein sequence ID" value="ABP37617.1"/>
    <property type="molecule type" value="Genomic_DNA"/>
</dbReference>
<dbReference type="SMR" id="A4SGK8"/>
<dbReference type="STRING" id="290318.Cvib_1607"/>
<dbReference type="KEGG" id="pvi:Cvib_1607"/>
<dbReference type="eggNOG" id="COG0244">
    <property type="taxonomic scope" value="Bacteria"/>
</dbReference>
<dbReference type="HOGENOM" id="CLU_092227_2_1_10"/>
<dbReference type="OrthoDB" id="1523686at2"/>
<dbReference type="GO" id="GO:1990904">
    <property type="term" value="C:ribonucleoprotein complex"/>
    <property type="evidence" value="ECO:0007669"/>
    <property type="project" value="UniProtKB-KW"/>
</dbReference>
<dbReference type="GO" id="GO:0005840">
    <property type="term" value="C:ribosome"/>
    <property type="evidence" value="ECO:0007669"/>
    <property type="project" value="UniProtKB-KW"/>
</dbReference>
<dbReference type="GO" id="GO:0070180">
    <property type="term" value="F:large ribosomal subunit rRNA binding"/>
    <property type="evidence" value="ECO:0007669"/>
    <property type="project" value="UniProtKB-UniRule"/>
</dbReference>
<dbReference type="GO" id="GO:0006412">
    <property type="term" value="P:translation"/>
    <property type="evidence" value="ECO:0007669"/>
    <property type="project" value="UniProtKB-UniRule"/>
</dbReference>
<dbReference type="CDD" id="cd05797">
    <property type="entry name" value="Ribosomal_L10"/>
    <property type="match status" value="1"/>
</dbReference>
<dbReference type="Gene3D" id="3.30.70.1730">
    <property type="match status" value="1"/>
</dbReference>
<dbReference type="Gene3D" id="6.10.250.290">
    <property type="match status" value="1"/>
</dbReference>
<dbReference type="HAMAP" id="MF_00362">
    <property type="entry name" value="Ribosomal_uL10"/>
    <property type="match status" value="1"/>
</dbReference>
<dbReference type="InterPro" id="IPR001790">
    <property type="entry name" value="Ribosomal_uL10"/>
</dbReference>
<dbReference type="InterPro" id="IPR043141">
    <property type="entry name" value="Ribosomal_uL10-like_sf"/>
</dbReference>
<dbReference type="InterPro" id="IPR022973">
    <property type="entry name" value="Ribosomal_uL10_bac"/>
</dbReference>
<dbReference type="InterPro" id="IPR047865">
    <property type="entry name" value="Ribosomal_uL10_bac_type"/>
</dbReference>
<dbReference type="NCBIfam" id="NF000955">
    <property type="entry name" value="PRK00099.1-1"/>
    <property type="match status" value="1"/>
</dbReference>
<dbReference type="PANTHER" id="PTHR11560">
    <property type="entry name" value="39S RIBOSOMAL PROTEIN L10, MITOCHONDRIAL"/>
    <property type="match status" value="1"/>
</dbReference>
<dbReference type="Pfam" id="PF00466">
    <property type="entry name" value="Ribosomal_L10"/>
    <property type="match status" value="1"/>
</dbReference>
<dbReference type="SUPFAM" id="SSF160369">
    <property type="entry name" value="Ribosomal protein L10-like"/>
    <property type="match status" value="1"/>
</dbReference>
<comment type="function">
    <text evidence="1">Forms part of the ribosomal stalk, playing a central role in the interaction of the ribosome with GTP-bound translation factors.</text>
</comment>
<comment type="subunit">
    <text evidence="1">Part of the ribosomal stalk of the 50S ribosomal subunit. The N-terminus interacts with L11 and the large rRNA to form the base of the stalk. The C-terminus forms an elongated spine to which L12 dimers bind in a sequential fashion forming a multimeric L10(L12)X complex.</text>
</comment>
<comment type="similarity">
    <text evidence="1">Belongs to the universal ribosomal protein uL10 family.</text>
</comment>
<proteinExistence type="inferred from homology"/>
<organism>
    <name type="scientific">Chlorobium phaeovibrioides (strain DSM 265 / 1930)</name>
    <name type="common">Prosthecochloris vibrioformis (strain DSM 265)</name>
    <dbReference type="NCBI Taxonomy" id="290318"/>
    <lineage>
        <taxon>Bacteria</taxon>
        <taxon>Pseudomonadati</taxon>
        <taxon>Chlorobiota</taxon>
        <taxon>Chlorobiia</taxon>
        <taxon>Chlorobiales</taxon>
        <taxon>Chlorobiaceae</taxon>
        <taxon>Chlorobium/Pelodictyon group</taxon>
        <taxon>Chlorobium</taxon>
    </lineage>
</organism>
<reference key="1">
    <citation type="submission" date="2007-03" db="EMBL/GenBank/DDBJ databases">
        <title>Complete sequence of Prosthecochloris vibrioformis DSM 265.</title>
        <authorList>
            <consortium name="US DOE Joint Genome Institute"/>
            <person name="Copeland A."/>
            <person name="Lucas S."/>
            <person name="Lapidus A."/>
            <person name="Barry K."/>
            <person name="Detter J.C."/>
            <person name="Glavina del Rio T."/>
            <person name="Hammon N."/>
            <person name="Israni S."/>
            <person name="Pitluck S."/>
            <person name="Schmutz J."/>
            <person name="Larimer F."/>
            <person name="Land M."/>
            <person name="Hauser L."/>
            <person name="Mikhailova N."/>
            <person name="Li T."/>
            <person name="Overmann J."/>
            <person name="Schuster S.C."/>
            <person name="Bryant D.A."/>
            <person name="Richardson P."/>
        </authorList>
    </citation>
    <scope>NUCLEOTIDE SEQUENCE [LARGE SCALE GENOMIC DNA]</scope>
    <source>
        <strain>DSM 265 / 1930</strain>
    </source>
</reference>
<keyword id="KW-0687">Ribonucleoprotein</keyword>
<keyword id="KW-0689">Ribosomal protein</keyword>
<keyword id="KW-0694">RNA-binding</keyword>
<keyword id="KW-0699">rRNA-binding</keyword>
<protein>
    <recommendedName>
        <fullName evidence="1">Large ribosomal subunit protein uL10</fullName>
    </recommendedName>
    <alternativeName>
        <fullName evidence="2">50S ribosomal protein L10</fullName>
    </alternativeName>
</protein>
<feature type="chain" id="PRO_1000079554" description="Large ribosomal subunit protein uL10">
    <location>
        <begin position="1"/>
        <end position="172"/>
    </location>
</feature>